<accession>C6A390</accession>
<reference key="1">
    <citation type="journal article" date="2009" name="Appl. Environ. Microbiol.">
        <title>Metabolic versatility and indigenous origin of the archaeon Thermococcus sibiricus, isolated from a siberian oil reservoir, as revealed by genome analysis.</title>
        <authorList>
            <person name="Mardanov A.V."/>
            <person name="Ravin N.V."/>
            <person name="Svetlitchnyi V.A."/>
            <person name="Beletsky A.V."/>
            <person name="Miroshnichenko M.L."/>
            <person name="Bonch-Osmolovskaya E.A."/>
            <person name="Skryabin K.G."/>
        </authorList>
    </citation>
    <scope>NUCLEOTIDE SEQUENCE [LARGE SCALE GENOMIC DNA]</scope>
    <source>
        <strain>DSM 12597 / MM 739</strain>
    </source>
</reference>
<keyword id="KW-1185">Reference proteome</keyword>
<dbReference type="EMBL" id="CP001463">
    <property type="protein sequence ID" value="ACS90085.1"/>
    <property type="molecule type" value="Genomic_DNA"/>
</dbReference>
<dbReference type="RefSeq" id="WP_015849304.1">
    <property type="nucleotide sequence ID" value="NC_012883.1"/>
</dbReference>
<dbReference type="STRING" id="604354.TSIB_1029"/>
<dbReference type="GeneID" id="8096025"/>
<dbReference type="KEGG" id="tsi:TSIB_1029"/>
<dbReference type="eggNOG" id="arCOG00969">
    <property type="taxonomic scope" value="Archaea"/>
</dbReference>
<dbReference type="HOGENOM" id="CLU_079268_0_0_2"/>
<dbReference type="OrthoDB" id="21331at2157"/>
<dbReference type="Proteomes" id="UP000009079">
    <property type="component" value="Chromosome"/>
</dbReference>
<dbReference type="Gene3D" id="3.60.15.10">
    <property type="entry name" value="Ribonuclease Z/Hydroxyacylglutathione hydrolase-like"/>
    <property type="match status" value="1"/>
</dbReference>
<dbReference type="HAMAP" id="MF_01406">
    <property type="entry name" value="UPF0282"/>
    <property type="match status" value="1"/>
</dbReference>
<dbReference type="InterPro" id="IPR036866">
    <property type="entry name" value="RibonucZ/Hydroxyglut_hydro"/>
</dbReference>
<dbReference type="InterPro" id="IPR050114">
    <property type="entry name" value="UPF0173_UPF0282_UlaG_hydrolase"/>
</dbReference>
<dbReference type="InterPro" id="IPR014426">
    <property type="entry name" value="UPF0282_hydrls"/>
</dbReference>
<dbReference type="NCBIfam" id="NF003290">
    <property type="entry name" value="PRK04286.1-6"/>
    <property type="match status" value="1"/>
</dbReference>
<dbReference type="PANTHER" id="PTHR43546">
    <property type="entry name" value="UPF0173 METAL-DEPENDENT HYDROLASE MJ1163-RELATED"/>
    <property type="match status" value="1"/>
</dbReference>
<dbReference type="PANTHER" id="PTHR43546:SF4">
    <property type="entry name" value="UPF0282 PROTEIN MJ1629"/>
    <property type="match status" value="1"/>
</dbReference>
<dbReference type="PIRSF" id="PIRSF004944">
    <property type="entry name" value="UCP004944_hydrls"/>
    <property type="match status" value="1"/>
</dbReference>
<dbReference type="SUPFAM" id="SSF56281">
    <property type="entry name" value="Metallo-hydrolase/oxidoreductase"/>
    <property type="match status" value="1"/>
</dbReference>
<sequence length="304" mass="34996">MKLIPLASESLGVRSLATFLEIGKIGILIDPGAALGPKRYSLSPAKAELEALQKAREKIQQYSRKAQIITISHYHYDHHTPFFEGIYESSSPEKAKDIYSRKTLFIKHPRENINFSQKKRAWAFLKEAEKIVEKIEHADGKFFDFGDFIMEFSPAVPHGSEGSKLGFVVMVMVDDGKQRLIHASDIQLLNRASKEWIIKQMPDLLITGGPPTYLEGYRVKEAWSTGLKNLNEIIKETNAEVILDHHLIRDKRYPEFLEQLEKQALTFARFLKKEDRPLEAYRKELHKIEKGEEAEVPFDVGWYL</sequence>
<proteinExistence type="inferred from homology"/>
<name>Y1029_THESM</name>
<comment type="similarity">
    <text evidence="1">Belongs to the UPF0282 family.</text>
</comment>
<protein>
    <recommendedName>
        <fullName evidence="1">UPF0282 protein TSIB_1029</fullName>
    </recommendedName>
</protein>
<gene>
    <name type="ordered locus">TSIB_1029</name>
</gene>
<feature type="chain" id="PRO_1000215211" description="UPF0282 protein TSIB_1029">
    <location>
        <begin position="1"/>
        <end position="304"/>
    </location>
</feature>
<evidence type="ECO:0000255" key="1">
    <source>
        <dbReference type="HAMAP-Rule" id="MF_01406"/>
    </source>
</evidence>
<organism>
    <name type="scientific">Thermococcus sibiricus (strain DSM 12597 / MM 739)</name>
    <dbReference type="NCBI Taxonomy" id="604354"/>
    <lineage>
        <taxon>Archaea</taxon>
        <taxon>Methanobacteriati</taxon>
        <taxon>Methanobacteriota</taxon>
        <taxon>Thermococci</taxon>
        <taxon>Thermococcales</taxon>
        <taxon>Thermococcaceae</taxon>
        <taxon>Thermococcus</taxon>
    </lineage>
</organism>